<comment type="function">
    <text evidence="1">Essential for recycling GMP and indirectly, cGMP.</text>
</comment>
<comment type="catalytic activity">
    <reaction evidence="1">
        <text>GMP + ATP = GDP + ADP</text>
        <dbReference type="Rhea" id="RHEA:20780"/>
        <dbReference type="ChEBI" id="CHEBI:30616"/>
        <dbReference type="ChEBI" id="CHEBI:58115"/>
        <dbReference type="ChEBI" id="CHEBI:58189"/>
        <dbReference type="ChEBI" id="CHEBI:456216"/>
        <dbReference type="EC" id="2.7.4.8"/>
    </reaction>
</comment>
<comment type="subcellular location">
    <subcellularLocation>
        <location evidence="1">Cytoplasm</location>
    </subcellularLocation>
</comment>
<comment type="similarity">
    <text evidence="1">Belongs to the guanylate kinase family.</text>
</comment>
<comment type="sequence caution" evidence="2">
    <conflict type="erroneous initiation">
        <sequence resource="EMBL-CDS" id="ABI25732"/>
    </conflict>
</comment>
<protein>
    <recommendedName>
        <fullName evidence="1">Guanylate kinase</fullName>
        <ecNumber evidence="1">2.7.4.8</ecNumber>
    </recommendedName>
    <alternativeName>
        <fullName evidence="1">GMP kinase</fullName>
    </alternativeName>
</protein>
<keyword id="KW-0067">ATP-binding</keyword>
<keyword id="KW-0963">Cytoplasm</keyword>
<keyword id="KW-0418">Kinase</keyword>
<keyword id="KW-0547">Nucleotide-binding</keyword>
<keyword id="KW-0808">Transferase</keyword>
<feature type="chain" id="PRO_0000266333" description="Guanylate kinase">
    <location>
        <begin position="1"/>
        <end position="208"/>
    </location>
</feature>
<feature type="domain" description="Guanylate kinase-like" evidence="1">
    <location>
        <begin position="4"/>
        <end position="185"/>
    </location>
</feature>
<feature type="binding site" evidence="1">
    <location>
        <begin position="11"/>
        <end position="18"/>
    </location>
    <ligand>
        <name>ATP</name>
        <dbReference type="ChEBI" id="CHEBI:30616"/>
    </ligand>
</feature>
<reference key="1">
    <citation type="journal article" date="2007" name="J. Bacteriol.">
        <title>Complete genome sequence of Haemophilus somnus (Histophilus somni) strain 129Pt and comparison to Haemophilus ducreyi 35000HP and Haemophilus influenzae Rd.</title>
        <authorList>
            <person name="Challacombe J.F."/>
            <person name="Duncan A.J."/>
            <person name="Brettin T.S."/>
            <person name="Bruce D."/>
            <person name="Chertkov O."/>
            <person name="Detter J.C."/>
            <person name="Han C.S."/>
            <person name="Misra M."/>
            <person name="Richardson P."/>
            <person name="Tapia R."/>
            <person name="Thayer N."/>
            <person name="Xie G."/>
            <person name="Inzana T.J."/>
        </authorList>
    </citation>
    <scope>NUCLEOTIDE SEQUENCE [LARGE SCALE GENOMIC DNA]</scope>
    <source>
        <strain>129Pt</strain>
    </source>
</reference>
<sequence length="208" mass="23522">MCRGNLYIISAPSGAGKSSLISALLERDKNDSMTVSISHTTRSPRPGEIDGVHYHFVSHEKFEQLILENSFLEYAKVFGGNYYGTSLLNIEKNLAAGIDVFLDIDWQGARQIREKRPDVKSIFILPPSISALEKRLIGRGQDSQDIIAKRMEKAADEISHYDEYDYVIINADFDQALVDLEHILRAERLTVNYQKTQNAALIHQLLVK</sequence>
<accession>Q0I5L8</accession>
<organism>
    <name type="scientific">Histophilus somni (strain 129Pt)</name>
    <name type="common">Haemophilus somnus</name>
    <dbReference type="NCBI Taxonomy" id="205914"/>
    <lineage>
        <taxon>Bacteria</taxon>
        <taxon>Pseudomonadati</taxon>
        <taxon>Pseudomonadota</taxon>
        <taxon>Gammaproteobacteria</taxon>
        <taxon>Pasteurellales</taxon>
        <taxon>Pasteurellaceae</taxon>
        <taxon>Histophilus</taxon>
    </lineage>
</organism>
<evidence type="ECO:0000255" key="1">
    <source>
        <dbReference type="HAMAP-Rule" id="MF_00328"/>
    </source>
</evidence>
<evidence type="ECO:0000305" key="2"/>
<gene>
    <name evidence="1" type="primary">gmk</name>
    <name type="ordered locus">HS_1457</name>
</gene>
<dbReference type="EC" id="2.7.4.8" evidence="1"/>
<dbReference type="EMBL" id="CP000436">
    <property type="protein sequence ID" value="ABI25732.1"/>
    <property type="status" value="ALT_INIT"/>
    <property type="molecule type" value="Genomic_DNA"/>
</dbReference>
<dbReference type="SMR" id="Q0I5L8"/>
<dbReference type="KEGG" id="hso:HS_1457"/>
<dbReference type="eggNOG" id="COG0194">
    <property type="taxonomic scope" value="Bacteria"/>
</dbReference>
<dbReference type="HOGENOM" id="CLU_001715_1_0_6"/>
<dbReference type="GO" id="GO:0005829">
    <property type="term" value="C:cytosol"/>
    <property type="evidence" value="ECO:0007669"/>
    <property type="project" value="TreeGrafter"/>
</dbReference>
<dbReference type="GO" id="GO:0005524">
    <property type="term" value="F:ATP binding"/>
    <property type="evidence" value="ECO:0007669"/>
    <property type="project" value="UniProtKB-UniRule"/>
</dbReference>
<dbReference type="GO" id="GO:0004385">
    <property type="term" value="F:guanylate kinase activity"/>
    <property type="evidence" value="ECO:0007669"/>
    <property type="project" value="UniProtKB-UniRule"/>
</dbReference>
<dbReference type="CDD" id="cd00071">
    <property type="entry name" value="GMPK"/>
    <property type="match status" value="1"/>
</dbReference>
<dbReference type="FunFam" id="3.40.50.300:FF:000855">
    <property type="entry name" value="Guanylate kinase"/>
    <property type="match status" value="1"/>
</dbReference>
<dbReference type="FunFam" id="3.30.63.10:FF:000002">
    <property type="entry name" value="Guanylate kinase 1"/>
    <property type="match status" value="1"/>
</dbReference>
<dbReference type="Gene3D" id="3.30.63.10">
    <property type="entry name" value="Guanylate Kinase phosphate binding domain"/>
    <property type="match status" value="1"/>
</dbReference>
<dbReference type="Gene3D" id="3.40.50.300">
    <property type="entry name" value="P-loop containing nucleotide triphosphate hydrolases"/>
    <property type="match status" value="2"/>
</dbReference>
<dbReference type="HAMAP" id="MF_00328">
    <property type="entry name" value="Guanylate_kinase"/>
    <property type="match status" value="1"/>
</dbReference>
<dbReference type="InterPro" id="IPR008145">
    <property type="entry name" value="GK/Ca_channel_bsu"/>
</dbReference>
<dbReference type="InterPro" id="IPR008144">
    <property type="entry name" value="Guanylate_kin-like_dom"/>
</dbReference>
<dbReference type="InterPro" id="IPR017665">
    <property type="entry name" value="Guanylate_kinase"/>
</dbReference>
<dbReference type="InterPro" id="IPR020590">
    <property type="entry name" value="Guanylate_kinase_CS"/>
</dbReference>
<dbReference type="InterPro" id="IPR027417">
    <property type="entry name" value="P-loop_NTPase"/>
</dbReference>
<dbReference type="NCBIfam" id="TIGR03263">
    <property type="entry name" value="guanyl_kin"/>
    <property type="match status" value="1"/>
</dbReference>
<dbReference type="PANTHER" id="PTHR23117:SF13">
    <property type="entry name" value="GUANYLATE KINASE"/>
    <property type="match status" value="1"/>
</dbReference>
<dbReference type="PANTHER" id="PTHR23117">
    <property type="entry name" value="GUANYLATE KINASE-RELATED"/>
    <property type="match status" value="1"/>
</dbReference>
<dbReference type="Pfam" id="PF00625">
    <property type="entry name" value="Guanylate_kin"/>
    <property type="match status" value="1"/>
</dbReference>
<dbReference type="SMART" id="SM00072">
    <property type="entry name" value="GuKc"/>
    <property type="match status" value="1"/>
</dbReference>
<dbReference type="SUPFAM" id="SSF52540">
    <property type="entry name" value="P-loop containing nucleoside triphosphate hydrolases"/>
    <property type="match status" value="1"/>
</dbReference>
<dbReference type="PROSITE" id="PS00856">
    <property type="entry name" value="GUANYLATE_KINASE_1"/>
    <property type="match status" value="1"/>
</dbReference>
<dbReference type="PROSITE" id="PS50052">
    <property type="entry name" value="GUANYLATE_KINASE_2"/>
    <property type="match status" value="1"/>
</dbReference>
<name>KGUA_HISS1</name>
<proteinExistence type="inferred from homology"/>